<gene>
    <name evidence="9" type="primary">gvpI2</name>
    <name evidence="7" type="synonym">c-gvpI</name>
    <name evidence="9" type="ordered locus">VNG_6233G</name>
</gene>
<evidence type="ECO:0000250" key="1">
    <source>
        <dbReference type="UniProtKB" id="Q9HI24"/>
    </source>
</evidence>
<evidence type="ECO:0000256" key="2">
    <source>
        <dbReference type="SAM" id="MobiDB-lite"/>
    </source>
</evidence>
<evidence type="ECO:0000269" key="3">
    <source>
    </source>
</evidence>
<evidence type="ECO:0000269" key="4">
    <source>
    </source>
</evidence>
<evidence type="ECO:0000269" key="5">
    <source>
    </source>
</evidence>
<evidence type="ECO:0000269" key="6">
    <source>
    </source>
</evidence>
<evidence type="ECO:0000303" key="7">
    <source>
    </source>
</evidence>
<evidence type="ECO:0000305" key="8"/>
<evidence type="ECO:0000312" key="9">
    <source>
        <dbReference type="EMBL" id="AAG20889.1"/>
    </source>
</evidence>
<evidence type="ECO:0000312" key="10">
    <source>
        <dbReference type="EMBL" id="CAA64348.1"/>
    </source>
</evidence>
<sequence>MTPTNRHTHGQNAQHARRNAQQSRDAARRKLIAQHAALAEQRARNRRRSDTEQPTSDTTNPAAHSTLPAQRTNAQNAARNAHSTVPEQPTHATTAARARLYGLRLHNTATTDK</sequence>
<name>GVPI2_HALSA</name>
<protein>
    <recommendedName>
        <fullName>Gas vesicle protein I2</fullName>
        <shortName>GvpI2</shortName>
    </recommendedName>
</protein>
<geneLocation type="plasmid">
    <name>pNRC200</name>
</geneLocation>
<reference key="1">
    <citation type="journal article" date="1992" name="J. Mol. Biol.">
        <title>Three different but related gene clusters encoding gas vesicles in halophilic archaea.</title>
        <authorList>
            <person name="Englert C."/>
            <person name="Krueger K."/>
            <person name="Offner S."/>
            <person name="Pfeifer F."/>
        </authorList>
    </citation>
    <scope>NUCLEOTIDE SEQUENCE [GENOMIC DNA]</scope>
    <scope>GAS VESICLE GENE CLUSTER</scope>
    <source>
        <strain>NRC-817</strain>
    </source>
</reference>
<reference evidence="10" key="2">
    <citation type="journal article" date="1996" name="J. Bacteriol.">
        <title>Transcript analysis of the c-vac region and differential synthesis of the two regulatory gas vesicle proteins GvpD and GvpE in Halobacterium salinarium PHH4.</title>
        <authorList>
            <person name="Krueger K."/>
            <person name="Pfeifer F."/>
        </authorList>
    </citation>
    <scope>NUCLEOTIDE SEQUENCE [GENOMIC DNA]</scope>
    <scope>INDUCTION</scope>
    <source>
        <strain>PHH1 /PHH4</strain>
    </source>
</reference>
<reference evidence="9" key="3">
    <citation type="journal article" date="2000" name="Proc. Natl. Acad. Sci. U.S.A.">
        <title>Genome sequence of Halobacterium species NRC-1.</title>
        <authorList>
            <person name="Ng W.V."/>
            <person name="Kennedy S.P."/>
            <person name="Mahairas G.G."/>
            <person name="Berquist B."/>
            <person name="Pan M."/>
            <person name="Shukla H.D."/>
            <person name="Lasky S.R."/>
            <person name="Baliga N.S."/>
            <person name="Thorsson V."/>
            <person name="Sbrogna J."/>
            <person name="Swartzell S."/>
            <person name="Weir D."/>
            <person name="Hall J."/>
            <person name="Dahl T.A."/>
            <person name="Welti R."/>
            <person name="Goo Y.A."/>
            <person name="Leithauser B."/>
            <person name="Keller K."/>
            <person name="Cruz R."/>
            <person name="Danson M.J."/>
            <person name="Hough D.W."/>
            <person name="Maddocks D.G."/>
            <person name="Jablonski P.E."/>
            <person name="Krebs M.P."/>
            <person name="Angevine C.M."/>
            <person name="Dale H."/>
            <person name="Isenbarger T.A."/>
            <person name="Peck R.F."/>
            <person name="Pohlschroder M."/>
            <person name="Spudich J.L."/>
            <person name="Jung K.-H."/>
            <person name="Alam M."/>
            <person name="Freitas T."/>
            <person name="Hou S."/>
            <person name="Daniels C.J."/>
            <person name="Dennis P.P."/>
            <person name="Omer A.D."/>
            <person name="Ebhardt H."/>
            <person name="Lowe T.M."/>
            <person name="Liang P."/>
            <person name="Riley M."/>
            <person name="Hood L."/>
            <person name="DasSarma S."/>
        </authorList>
    </citation>
    <scope>NUCLEOTIDE SEQUENCE [LARGE SCALE GENOMIC DNA]</scope>
    <source>
        <strain>ATCC 700922 / JCM 11081 / NRC-1</strain>
        <plasmid>pNRC200</plasmid>
    </source>
</reference>
<reference key="4">
    <citation type="journal article" date="1997" name="Microbiology">
        <title>Growth competition between Halobacterium salinarium strain PHH1 and mutants affected in gas vesicle synthesis.</title>
        <authorList>
            <person name="Beard S.J."/>
            <person name="Hayes P.K."/>
            <person name="Walsby A.E."/>
        </authorList>
    </citation>
    <scope>FUNCTION IN BUOYANCY</scope>
    <scope>POSSIBLE INDUCTION BY OXYGEN LIMITATION</scope>
    <source>
        <strain>PHH1</strain>
    </source>
</reference>
<reference key="5">
    <citation type="journal article" date="1998" name="Microbiology">
        <title>Structural characteristics of halobacterial gas vesicles.</title>
        <authorList>
            <person name="Offner S."/>
            <person name="Ziese U."/>
            <person name="Wanner G."/>
            <person name="Typke D."/>
            <person name="Pfeifer F."/>
        </authorList>
    </citation>
    <scope>FUNCTION</scope>
    <source>
        <strain>PHH1</strain>
    </source>
</reference>
<comment type="function">
    <text evidence="1 4">Proteins GvpF to GvpM might be involved in nucleating gas vesicle formation. A minor component of the gas vesicle (By similarity). Gas vesicles are hollow, gas filled proteinaceous nanostructures found in several microbial planktonic microorganisms. They allow positioning of halobacteria at the optimal depth for growth in the poorly aerated, shallow brine pools of their habitat (PubMed:33711860).</text>
</comment>
<comment type="function">
    <text evidence="6">Expression of 2 c-vac DNA fragments containing 2 divergently transcribed regions (gvpE-gvpF-gvpG-gvpH-gvpI-gvpJ-gvpK-gvpL-gvpM and gvpA-gvpC-gvpN-gvpO) allows H.volcanii to produce gas vesicles.</text>
</comment>
<comment type="subunit">
    <text evidence="1">GvpF to GvpM interact with each other in vitro, and may form multi-subunit complex(es). Interacts with GvpC and GvpO.</text>
</comment>
<comment type="subcellular location">
    <subcellularLocation>
        <location evidence="1">Gas vesicle</location>
    </subcellularLocation>
</comment>
<comment type="induction">
    <text evidence="4 5">In PHH4 (a deletion of the p-vac locus) transcribed in all growth phases, maximal expression in mid-stationary phase. An unstable 6kb transcript able to cover gvpD-gvpE-gvpF-gvpG-gvpH-gvpI-gvpJ-gvpK-gvpL-gvpM is detected, as well as smaller transcripts (PubMed:8763925). Gas vesicles appear earlier when grown in static culture, possibly due to O(2)-limitation (PubMed:33711860).</text>
</comment>
<comment type="miscellaneous">
    <text evidence="3 5">Encoded in a 14-gene locus called c-vac which produces cylindrical gas vesicles only in the stationary growth phase.</text>
</comment>
<comment type="similarity">
    <text evidence="8">Belongs to the gas vesicle GvpI family.</text>
</comment>
<comment type="sequence caution" evidence="8">
    <conflict type="frameshift">
        <sequence resource="EMBL-CDS" id="CAA45988"/>
    </conflict>
</comment>
<comment type="sequence caution" evidence="8">
    <conflict type="frameshift">
        <sequence resource="EMBL-CDS" id="CAA64348"/>
    </conflict>
</comment>
<proteinExistence type="evidence at protein level"/>
<organism>
    <name type="scientific">Halobacterium salinarum (strain ATCC 700922 / JCM 11081 / NRC-1)</name>
    <name type="common">Halobacterium halobium</name>
    <dbReference type="NCBI Taxonomy" id="64091"/>
    <lineage>
        <taxon>Archaea</taxon>
        <taxon>Methanobacteriati</taxon>
        <taxon>Methanobacteriota</taxon>
        <taxon>Stenosarchaea group</taxon>
        <taxon>Halobacteria</taxon>
        <taxon>Halobacteriales</taxon>
        <taxon>Halobacteriaceae</taxon>
        <taxon>Halobacterium</taxon>
        <taxon>Halobacterium salinarum NRC-34001</taxon>
    </lineage>
</organism>
<feature type="chain" id="PRO_0000182691" description="Gas vesicle protein I2">
    <location>
        <begin position="1"/>
        <end position="113"/>
    </location>
</feature>
<feature type="region of interest" description="Disordered" evidence="2">
    <location>
        <begin position="1"/>
        <end position="93"/>
    </location>
</feature>
<feature type="compositionally biased region" description="Low complexity" evidence="2">
    <location>
        <begin position="11"/>
        <end position="22"/>
    </location>
</feature>
<feature type="compositionally biased region" description="Polar residues" evidence="2">
    <location>
        <begin position="52"/>
        <end position="63"/>
    </location>
</feature>
<feature type="compositionally biased region" description="Low complexity" evidence="2">
    <location>
        <begin position="69"/>
        <end position="81"/>
    </location>
</feature>
<feature type="compositionally biased region" description="Polar residues" evidence="2">
    <location>
        <begin position="82"/>
        <end position="93"/>
    </location>
</feature>
<keyword id="KW-0304">Gas vesicle</keyword>
<keyword id="KW-0614">Plasmid</keyword>
<keyword id="KW-1185">Reference proteome</keyword>
<accession>Q9HHT7</accession>
<accession>P33962</accession>
<dbReference type="EMBL" id="X64730">
    <property type="protein sequence ID" value="CAA45988.1"/>
    <property type="status" value="ALT_FRAME"/>
    <property type="molecule type" value="Genomic_DNA"/>
</dbReference>
<dbReference type="EMBL" id="X94688">
    <property type="protein sequence ID" value="CAA64348.1"/>
    <property type="status" value="ALT_FRAME"/>
    <property type="molecule type" value="Genomic_DNA"/>
</dbReference>
<dbReference type="EMBL" id="AE004438">
    <property type="protein sequence ID" value="AAG20889.1"/>
    <property type="molecule type" value="Genomic_DNA"/>
</dbReference>
<dbReference type="SMR" id="Q9HHT7"/>
<dbReference type="KEGG" id="hal:VNG_6233G"/>
<dbReference type="PATRIC" id="fig|64091.14.peg.2237"/>
<dbReference type="HOGENOM" id="CLU_147792_0_0_2"/>
<dbReference type="InParanoid" id="Q9HHT7"/>
<dbReference type="Proteomes" id="UP000000554">
    <property type="component" value="Plasmid pNRC200"/>
</dbReference>
<dbReference type="GO" id="GO:0031411">
    <property type="term" value="C:gas vesicle"/>
    <property type="evidence" value="ECO:0007669"/>
    <property type="project" value="UniProtKB-SubCell"/>
</dbReference>